<comment type="function">
    <text evidence="1">Involved in unsaturated fatty acids biosynthesis. Catalyzes the dehydration of short chain beta-hydroxyacyl-ACPs and long chain saturated and unsaturated beta-hydroxyacyl-ACPs.</text>
</comment>
<comment type="catalytic activity">
    <reaction evidence="1">
        <text>a (3R)-hydroxyacyl-[ACP] = a (2E)-enoyl-[ACP] + H2O</text>
        <dbReference type="Rhea" id="RHEA:13097"/>
        <dbReference type="Rhea" id="RHEA-COMP:9925"/>
        <dbReference type="Rhea" id="RHEA-COMP:9945"/>
        <dbReference type="ChEBI" id="CHEBI:15377"/>
        <dbReference type="ChEBI" id="CHEBI:78784"/>
        <dbReference type="ChEBI" id="CHEBI:78827"/>
        <dbReference type="EC" id="4.2.1.59"/>
    </reaction>
</comment>
<comment type="subcellular location">
    <subcellularLocation>
        <location evidence="1">Cytoplasm</location>
    </subcellularLocation>
</comment>
<comment type="similarity">
    <text evidence="1">Belongs to the thioester dehydratase family. FabZ subfamily.</text>
</comment>
<proteinExistence type="inferred from homology"/>
<keyword id="KW-0963">Cytoplasm</keyword>
<keyword id="KW-0441">Lipid A biosynthesis</keyword>
<keyword id="KW-0444">Lipid biosynthesis</keyword>
<keyword id="KW-0443">Lipid metabolism</keyword>
<keyword id="KW-0456">Lyase</keyword>
<accession>Q0I4M3</accession>
<reference key="1">
    <citation type="journal article" date="2007" name="J. Bacteriol.">
        <title>Complete genome sequence of Haemophilus somnus (Histophilus somni) strain 129Pt and comparison to Haemophilus ducreyi 35000HP and Haemophilus influenzae Rd.</title>
        <authorList>
            <person name="Challacombe J.F."/>
            <person name="Duncan A.J."/>
            <person name="Brettin T.S."/>
            <person name="Bruce D."/>
            <person name="Chertkov O."/>
            <person name="Detter J.C."/>
            <person name="Han C.S."/>
            <person name="Misra M."/>
            <person name="Richardson P."/>
            <person name="Tapia R."/>
            <person name="Thayer N."/>
            <person name="Xie G."/>
            <person name="Inzana T.J."/>
        </authorList>
    </citation>
    <scope>NUCLEOTIDE SEQUENCE [LARGE SCALE GENOMIC DNA]</scope>
    <source>
        <strain>129Pt</strain>
    </source>
</reference>
<protein>
    <recommendedName>
        <fullName evidence="1">3-hydroxyacyl-[acyl-carrier-protein] dehydratase FabZ</fullName>
        <ecNumber evidence="1">4.2.1.59</ecNumber>
    </recommendedName>
    <alternativeName>
        <fullName evidence="1">(3R)-hydroxymyristoyl-[acyl-carrier-protein] dehydratase</fullName>
        <shortName evidence="1">(3R)-hydroxymyristoyl-ACP dehydrase</shortName>
    </alternativeName>
    <alternativeName>
        <fullName evidence="1">Beta-hydroxyacyl-ACP dehydratase</fullName>
    </alternativeName>
</protein>
<sequence>MTVTTERIARIIESKEIMTLLPHRYPFLLVDRVTDYEEGKWLTAIKNVSVNEPCFTGHFPDQPILPGVLILEALAQAMGILAFKTHELSNKELFYFAGVDEARFKRPILPGDQMMLKVEVIRERRGITAFTGVASVNGEVACEAKLMCARR</sequence>
<dbReference type="EC" id="4.2.1.59" evidence="1"/>
<dbReference type="EMBL" id="CP000436">
    <property type="protein sequence ID" value="ABI25635.1"/>
    <property type="molecule type" value="Genomic_DNA"/>
</dbReference>
<dbReference type="SMR" id="Q0I4M3"/>
<dbReference type="KEGG" id="hso:HS_1360"/>
<dbReference type="eggNOG" id="COG0764">
    <property type="taxonomic scope" value="Bacteria"/>
</dbReference>
<dbReference type="HOGENOM" id="CLU_078912_1_0_6"/>
<dbReference type="GO" id="GO:0005737">
    <property type="term" value="C:cytoplasm"/>
    <property type="evidence" value="ECO:0007669"/>
    <property type="project" value="UniProtKB-SubCell"/>
</dbReference>
<dbReference type="GO" id="GO:0016020">
    <property type="term" value="C:membrane"/>
    <property type="evidence" value="ECO:0007669"/>
    <property type="project" value="GOC"/>
</dbReference>
<dbReference type="GO" id="GO:0019171">
    <property type="term" value="F:(3R)-hydroxyacyl-[acyl-carrier-protein] dehydratase activity"/>
    <property type="evidence" value="ECO:0007669"/>
    <property type="project" value="UniProtKB-EC"/>
</dbReference>
<dbReference type="GO" id="GO:0006633">
    <property type="term" value="P:fatty acid biosynthetic process"/>
    <property type="evidence" value="ECO:0007669"/>
    <property type="project" value="UniProtKB-UniRule"/>
</dbReference>
<dbReference type="GO" id="GO:0009245">
    <property type="term" value="P:lipid A biosynthetic process"/>
    <property type="evidence" value="ECO:0007669"/>
    <property type="project" value="UniProtKB-UniRule"/>
</dbReference>
<dbReference type="CDD" id="cd01288">
    <property type="entry name" value="FabZ"/>
    <property type="match status" value="1"/>
</dbReference>
<dbReference type="FunFam" id="3.10.129.10:FF:000001">
    <property type="entry name" value="3-hydroxyacyl-[acyl-carrier-protein] dehydratase FabZ"/>
    <property type="match status" value="1"/>
</dbReference>
<dbReference type="Gene3D" id="3.10.129.10">
    <property type="entry name" value="Hotdog Thioesterase"/>
    <property type="match status" value="1"/>
</dbReference>
<dbReference type="HAMAP" id="MF_00406">
    <property type="entry name" value="FabZ"/>
    <property type="match status" value="1"/>
</dbReference>
<dbReference type="InterPro" id="IPR013114">
    <property type="entry name" value="FabA_FabZ"/>
</dbReference>
<dbReference type="InterPro" id="IPR010084">
    <property type="entry name" value="FabZ"/>
</dbReference>
<dbReference type="InterPro" id="IPR029069">
    <property type="entry name" value="HotDog_dom_sf"/>
</dbReference>
<dbReference type="NCBIfam" id="TIGR01750">
    <property type="entry name" value="fabZ"/>
    <property type="match status" value="1"/>
</dbReference>
<dbReference type="NCBIfam" id="NF000582">
    <property type="entry name" value="PRK00006.1"/>
    <property type="match status" value="1"/>
</dbReference>
<dbReference type="PANTHER" id="PTHR30272">
    <property type="entry name" value="3-HYDROXYACYL-[ACYL-CARRIER-PROTEIN] DEHYDRATASE"/>
    <property type="match status" value="1"/>
</dbReference>
<dbReference type="PANTHER" id="PTHR30272:SF1">
    <property type="entry name" value="3-HYDROXYACYL-[ACYL-CARRIER-PROTEIN] DEHYDRATASE"/>
    <property type="match status" value="1"/>
</dbReference>
<dbReference type="Pfam" id="PF07977">
    <property type="entry name" value="FabA"/>
    <property type="match status" value="1"/>
</dbReference>
<dbReference type="SUPFAM" id="SSF54637">
    <property type="entry name" value="Thioesterase/thiol ester dehydrase-isomerase"/>
    <property type="match status" value="1"/>
</dbReference>
<evidence type="ECO:0000255" key="1">
    <source>
        <dbReference type="HAMAP-Rule" id="MF_00406"/>
    </source>
</evidence>
<name>FABZ_HISS1</name>
<organism>
    <name type="scientific">Histophilus somni (strain 129Pt)</name>
    <name type="common">Haemophilus somnus</name>
    <dbReference type="NCBI Taxonomy" id="205914"/>
    <lineage>
        <taxon>Bacteria</taxon>
        <taxon>Pseudomonadati</taxon>
        <taxon>Pseudomonadota</taxon>
        <taxon>Gammaproteobacteria</taxon>
        <taxon>Pasteurellales</taxon>
        <taxon>Pasteurellaceae</taxon>
        <taxon>Histophilus</taxon>
    </lineage>
</organism>
<feature type="chain" id="PRO_0000340779" description="3-hydroxyacyl-[acyl-carrier-protein] dehydratase FabZ">
    <location>
        <begin position="1"/>
        <end position="151"/>
    </location>
</feature>
<feature type="active site" evidence="1">
    <location>
        <position position="58"/>
    </location>
</feature>
<gene>
    <name evidence="1" type="primary">fabZ</name>
    <name type="ordered locus">HS_1360</name>
</gene>